<sequence>MFTNPIICALDTHDINHALLLTKMLYGRVSMVKLGLEFFTAYGLSGVQAIADCGVPIFLDLKLHDIPNTVSKAISVIASLNVAMLTIHVSGGREMMIRAMDSISGSVTKLVGVTVLTSMDDSDLKEIGVNESPVQQVMLLSKLAREVGLYGIVCSAFEAKEVRNRYTEKDLKLIVPGIRFDSDCNDQKRVKSPKDAMLAGANYLVIGRPITMSSDPVQTVEDILLSISKCI</sequence>
<accession>Q2GG43</accession>
<organism>
    <name type="scientific">Ehrlichia chaffeensis (strain ATCC CRL-10679 / Arkansas)</name>
    <dbReference type="NCBI Taxonomy" id="205920"/>
    <lineage>
        <taxon>Bacteria</taxon>
        <taxon>Pseudomonadati</taxon>
        <taxon>Pseudomonadota</taxon>
        <taxon>Alphaproteobacteria</taxon>
        <taxon>Rickettsiales</taxon>
        <taxon>Anaplasmataceae</taxon>
        <taxon>Ehrlichia</taxon>
    </lineage>
</organism>
<feature type="chain" id="PRO_0000241857" description="Orotidine 5'-phosphate decarboxylase">
    <location>
        <begin position="1"/>
        <end position="231"/>
    </location>
</feature>
<feature type="active site" description="Proton donor" evidence="1">
    <location>
        <position position="62"/>
    </location>
</feature>
<feature type="binding site" evidence="1">
    <location>
        <position position="11"/>
    </location>
    <ligand>
        <name>substrate</name>
    </ligand>
</feature>
<feature type="binding site" evidence="1">
    <location>
        <position position="33"/>
    </location>
    <ligand>
        <name>substrate</name>
    </ligand>
</feature>
<feature type="binding site" evidence="1">
    <location>
        <begin position="60"/>
        <end position="69"/>
    </location>
    <ligand>
        <name>substrate</name>
    </ligand>
</feature>
<feature type="binding site" evidence="1">
    <location>
        <position position="117"/>
    </location>
    <ligand>
        <name>substrate</name>
    </ligand>
</feature>
<feature type="binding site" evidence="1">
    <location>
        <position position="179"/>
    </location>
    <ligand>
        <name>substrate</name>
    </ligand>
</feature>
<feature type="binding site" evidence="1">
    <location>
        <position position="187"/>
    </location>
    <ligand>
        <name>substrate</name>
    </ligand>
</feature>
<feature type="binding site" evidence="1">
    <location>
        <position position="207"/>
    </location>
    <ligand>
        <name>substrate</name>
    </ligand>
</feature>
<feature type="binding site" evidence="1">
    <location>
        <position position="208"/>
    </location>
    <ligand>
        <name>substrate</name>
    </ligand>
</feature>
<reference key="1">
    <citation type="journal article" date="2006" name="PLoS Genet.">
        <title>Comparative genomics of emerging human ehrlichiosis agents.</title>
        <authorList>
            <person name="Dunning Hotopp J.C."/>
            <person name="Lin M."/>
            <person name="Madupu R."/>
            <person name="Crabtree J."/>
            <person name="Angiuoli S.V."/>
            <person name="Eisen J.A."/>
            <person name="Seshadri R."/>
            <person name="Ren Q."/>
            <person name="Wu M."/>
            <person name="Utterback T.R."/>
            <person name="Smith S."/>
            <person name="Lewis M."/>
            <person name="Khouri H."/>
            <person name="Zhang C."/>
            <person name="Niu H."/>
            <person name="Lin Q."/>
            <person name="Ohashi N."/>
            <person name="Zhi N."/>
            <person name="Nelson W.C."/>
            <person name="Brinkac L.M."/>
            <person name="Dodson R.J."/>
            <person name="Rosovitz M.J."/>
            <person name="Sundaram J.P."/>
            <person name="Daugherty S.C."/>
            <person name="Davidsen T."/>
            <person name="Durkin A.S."/>
            <person name="Gwinn M.L."/>
            <person name="Haft D.H."/>
            <person name="Selengut J.D."/>
            <person name="Sullivan S.A."/>
            <person name="Zafar N."/>
            <person name="Zhou L."/>
            <person name="Benahmed F."/>
            <person name="Forberger H."/>
            <person name="Halpin R."/>
            <person name="Mulligan S."/>
            <person name="Robinson J."/>
            <person name="White O."/>
            <person name="Rikihisa Y."/>
            <person name="Tettelin H."/>
        </authorList>
    </citation>
    <scope>NUCLEOTIDE SEQUENCE [LARGE SCALE GENOMIC DNA]</scope>
    <source>
        <strain>ATCC CRL-10679 / Arkansas</strain>
    </source>
</reference>
<proteinExistence type="inferred from homology"/>
<evidence type="ECO:0000255" key="1">
    <source>
        <dbReference type="HAMAP-Rule" id="MF_01200"/>
    </source>
</evidence>
<dbReference type="EC" id="4.1.1.23" evidence="1"/>
<dbReference type="EMBL" id="CP000236">
    <property type="protein sequence ID" value="ABD45528.1"/>
    <property type="molecule type" value="Genomic_DNA"/>
</dbReference>
<dbReference type="RefSeq" id="WP_011452816.1">
    <property type="nucleotide sequence ID" value="NC_007799.1"/>
</dbReference>
<dbReference type="SMR" id="Q2GG43"/>
<dbReference type="STRING" id="205920.ECH_0792"/>
<dbReference type="KEGG" id="ech:ECH_0792"/>
<dbReference type="eggNOG" id="COG0284">
    <property type="taxonomic scope" value="Bacteria"/>
</dbReference>
<dbReference type="HOGENOM" id="CLU_067069_1_0_5"/>
<dbReference type="OrthoDB" id="9806203at2"/>
<dbReference type="UniPathway" id="UPA00070">
    <property type="reaction ID" value="UER00120"/>
</dbReference>
<dbReference type="Proteomes" id="UP000008320">
    <property type="component" value="Chromosome"/>
</dbReference>
<dbReference type="GO" id="GO:0005829">
    <property type="term" value="C:cytosol"/>
    <property type="evidence" value="ECO:0007669"/>
    <property type="project" value="TreeGrafter"/>
</dbReference>
<dbReference type="GO" id="GO:0004590">
    <property type="term" value="F:orotidine-5'-phosphate decarboxylase activity"/>
    <property type="evidence" value="ECO:0007669"/>
    <property type="project" value="UniProtKB-UniRule"/>
</dbReference>
<dbReference type="GO" id="GO:0006207">
    <property type="term" value="P:'de novo' pyrimidine nucleobase biosynthetic process"/>
    <property type="evidence" value="ECO:0007669"/>
    <property type="project" value="InterPro"/>
</dbReference>
<dbReference type="GO" id="GO:0044205">
    <property type="term" value="P:'de novo' UMP biosynthetic process"/>
    <property type="evidence" value="ECO:0007669"/>
    <property type="project" value="UniProtKB-UniRule"/>
</dbReference>
<dbReference type="CDD" id="cd04725">
    <property type="entry name" value="OMP_decarboxylase_like"/>
    <property type="match status" value="1"/>
</dbReference>
<dbReference type="Gene3D" id="3.20.20.70">
    <property type="entry name" value="Aldolase class I"/>
    <property type="match status" value="1"/>
</dbReference>
<dbReference type="HAMAP" id="MF_01200_B">
    <property type="entry name" value="OMPdecase_type1_B"/>
    <property type="match status" value="1"/>
</dbReference>
<dbReference type="InterPro" id="IPR013785">
    <property type="entry name" value="Aldolase_TIM"/>
</dbReference>
<dbReference type="InterPro" id="IPR014732">
    <property type="entry name" value="OMPdecase"/>
</dbReference>
<dbReference type="InterPro" id="IPR018089">
    <property type="entry name" value="OMPdecase_AS"/>
</dbReference>
<dbReference type="InterPro" id="IPR047596">
    <property type="entry name" value="OMPdecase_bac"/>
</dbReference>
<dbReference type="InterPro" id="IPR001754">
    <property type="entry name" value="OMPdeCOase_dom"/>
</dbReference>
<dbReference type="InterPro" id="IPR011060">
    <property type="entry name" value="RibuloseP-bd_barrel"/>
</dbReference>
<dbReference type="NCBIfam" id="NF001273">
    <property type="entry name" value="PRK00230.1"/>
    <property type="match status" value="1"/>
</dbReference>
<dbReference type="NCBIfam" id="TIGR01740">
    <property type="entry name" value="pyrF"/>
    <property type="match status" value="1"/>
</dbReference>
<dbReference type="PANTHER" id="PTHR32119">
    <property type="entry name" value="OROTIDINE 5'-PHOSPHATE DECARBOXYLASE"/>
    <property type="match status" value="1"/>
</dbReference>
<dbReference type="PANTHER" id="PTHR32119:SF2">
    <property type="entry name" value="OROTIDINE 5'-PHOSPHATE DECARBOXYLASE"/>
    <property type="match status" value="1"/>
</dbReference>
<dbReference type="Pfam" id="PF00215">
    <property type="entry name" value="OMPdecase"/>
    <property type="match status" value="1"/>
</dbReference>
<dbReference type="SMART" id="SM00934">
    <property type="entry name" value="OMPdecase"/>
    <property type="match status" value="1"/>
</dbReference>
<dbReference type="SUPFAM" id="SSF51366">
    <property type="entry name" value="Ribulose-phoshate binding barrel"/>
    <property type="match status" value="1"/>
</dbReference>
<dbReference type="PROSITE" id="PS00156">
    <property type="entry name" value="OMPDECASE"/>
    <property type="match status" value="1"/>
</dbReference>
<comment type="function">
    <text evidence="1">Catalyzes the decarboxylation of orotidine 5'-monophosphate (OMP) to uridine 5'-monophosphate (UMP).</text>
</comment>
<comment type="catalytic activity">
    <reaction evidence="1">
        <text>orotidine 5'-phosphate + H(+) = UMP + CO2</text>
        <dbReference type="Rhea" id="RHEA:11596"/>
        <dbReference type="ChEBI" id="CHEBI:15378"/>
        <dbReference type="ChEBI" id="CHEBI:16526"/>
        <dbReference type="ChEBI" id="CHEBI:57538"/>
        <dbReference type="ChEBI" id="CHEBI:57865"/>
        <dbReference type="EC" id="4.1.1.23"/>
    </reaction>
</comment>
<comment type="pathway">
    <text evidence="1">Pyrimidine metabolism; UMP biosynthesis via de novo pathway; UMP from orotate: step 2/2.</text>
</comment>
<comment type="subunit">
    <text evidence="1">Homodimer.</text>
</comment>
<comment type="similarity">
    <text evidence="1">Belongs to the OMP decarboxylase family. Type 1 subfamily.</text>
</comment>
<gene>
    <name evidence="1" type="primary">pyrF</name>
    <name type="ordered locus">ECH_0792</name>
</gene>
<keyword id="KW-0210">Decarboxylase</keyword>
<keyword id="KW-0456">Lyase</keyword>
<keyword id="KW-0665">Pyrimidine biosynthesis</keyword>
<keyword id="KW-1185">Reference proteome</keyword>
<name>PYRF_EHRCR</name>
<protein>
    <recommendedName>
        <fullName evidence="1">Orotidine 5'-phosphate decarboxylase</fullName>
        <ecNumber evidence="1">4.1.1.23</ecNumber>
    </recommendedName>
    <alternativeName>
        <fullName evidence="1">OMP decarboxylase</fullName>
        <shortName evidence="1">OMPDCase</shortName>
        <shortName evidence="1">OMPdecase</shortName>
    </alternativeName>
</protein>